<keyword id="KW-0067">ATP-binding</keyword>
<keyword id="KW-0963">Cytoplasm</keyword>
<keyword id="KW-0324">Glycolysis</keyword>
<keyword id="KW-0418">Kinase</keyword>
<keyword id="KW-0547">Nucleotide-binding</keyword>
<keyword id="KW-1185">Reference proteome</keyword>
<keyword id="KW-0808">Transferase</keyword>
<sequence length="392" mass="40632">MAFLKLTEQNVQGKTVLIRADMNVPFKDGKISDDTRIRASLASIKYCVDNGASVIVMTHLGRPTEGEFHPEDDVAPVAAHLGSLLGKDVKVLNDWRENKPALNAGDVVMLQNVRINKGEKKNDLELGKAYASLCDVFVNDAFGTAHRAQASTEAVAQAAPVACAGVLMAGELDALGKALKQPARPMVAIVAGSKVSTKLTILESLADKVDQLIVGGGIANTFLLAEGKAIGKSLAEHDLVEESKKIMAKMAAKGGSVPLPTDVVVAKAFAADAEAVVKDIADVAEDEMILDIGPKSAAALADLLKAAGTVVWNGPVGVFEFDQFAGGTKALAEAIAQSKAFSIAGGGDTLAAIAKFGVTEQIGYISTGGGAFLEFLEGKELPAVAALEKRGA</sequence>
<gene>
    <name type="primary">pgk</name>
    <name type="ordered locus">NMB0010</name>
</gene>
<evidence type="ECO:0000250" key="1"/>
<evidence type="ECO:0000305" key="2"/>
<name>PGK_NEIMB</name>
<comment type="catalytic activity">
    <reaction>
        <text>(2R)-3-phosphoglycerate + ATP = (2R)-3-phospho-glyceroyl phosphate + ADP</text>
        <dbReference type="Rhea" id="RHEA:14801"/>
        <dbReference type="ChEBI" id="CHEBI:30616"/>
        <dbReference type="ChEBI" id="CHEBI:57604"/>
        <dbReference type="ChEBI" id="CHEBI:58272"/>
        <dbReference type="ChEBI" id="CHEBI:456216"/>
        <dbReference type="EC" id="2.7.2.3"/>
    </reaction>
</comment>
<comment type="pathway">
    <text>Carbohydrate degradation; glycolysis; pyruvate from D-glyceraldehyde 3-phosphate: step 2/5.</text>
</comment>
<comment type="subunit">
    <text evidence="1">Monomer.</text>
</comment>
<comment type="subcellular location">
    <subcellularLocation>
        <location evidence="2">Cytoplasm</location>
    </subcellularLocation>
</comment>
<comment type="similarity">
    <text evidence="2">Belongs to the phosphoglycerate kinase family.</text>
</comment>
<comment type="sequence caution" evidence="2">
    <conflict type="miscellaneous discrepancy">
        <sequence resource="EMBL-CDS" id="AAF40489"/>
    </conflict>
    <text>Probable incorrect perfect sequence repeat which was excised.</text>
</comment>
<reference key="1">
    <citation type="journal article" date="2000" name="Science">
        <title>Complete genome sequence of Neisseria meningitidis serogroup B strain MC58.</title>
        <authorList>
            <person name="Tettelin H."/>
            <person name="Saunders N.J."/>
            <person name="Heidelberg J.F."/>
            <person name="Jeffries A.C."/>
            <person name="Nelson K.E."/>
            <person name="Eisen J.A."/>
            <person name="Ketchum K.A."/>
            <person name="Hood D.W."/>
            <person name="Peden J.F."/>
            <person name="Dodson R.J."/>
            <person name="Nelson W.C."/>
            <person name="Gwinn M.L."/>
            <person name="DeBoy R.T."/>
            <person name="Peterson J.D."/>
            <person name="Hickey E.K."/>
            <person name="Haft D.H."/>
            <person name="Salzberg S.L."/>
            <person name="White O."/>
            <person name="Fleischmann R.D."/>
            <person name="Dougherty B.A."/>
            <person name="Mason T.M."/>
            <person name="Ciecko A."/>
            <person name="Parksey D.S."/>
            <person name="Blair E."/>
            <person name="Cittone H."/>
            <person name="Clark E.B."/>
            <person name="Cotton M.D."/>
            <person name="Utterback T.R."/>
            <person name="Khouri H.M."/>
            <person name="Qin H."/>
            <person name="Vamathevan J.J."/>
            <person name="Gill J."/>
            <person name="Scarlato V."/>
            <person name="Masignani V."/>
            <person name="Pizza M."/>
            <person name="Grandi G."/>
            <person name="Sun L."/>
            <person name="Smith H.O."/>
            <person name="Fraser C.M."/>
            <person name="Moxon E.R."/>
            <person name="Rappuoli R."/>
            <person name="Venter J.C."/>
        </authorList>
    </citation>
    <scope>NUCLEOTIDE SEQUENCE [LARGE SCALE GENOMIC DNA]</scope>
    <source>
        <strain>ATCC BAA-335 / MC58</strain>
    </source>
</reference>
<organism>
    <name type="scientific">Neisseria meningitidis serogroup B (strain ATCC BAA-335 / MC58)</name>
    <dbReference type="NCBI Taxonomy" id="122586"/>
    <lineage>
        <taxon>Bacteria</taxon>
        <taxon>Pseudomonadati</taxon>
        <taxon>Pseudomonadota</taxon>
        <taxon>Betaproteobacteria</taxon>
        <taxon>Neisseriales</taxon>
        <taxon>Neisseriaceae</taxon>
        <taxon>Neisseria</taxon>
    </lineage>
</organism>
<feature type="chain" id="PRO_0000145976" description="Phosphoglycerate kinase">
    <location>
        <begin position="1"/>
        <end position="392"/>
    </location>
</feature>
<feature type="binding site" evidence="1">
    <location>
        <begin position="21"/>
        <end position="23"/>
    </location>
    <ligand>
        <name>substrate</name>
    </ligand>
</feature>
<feature type="binding site" evidence="1">
    <location>
        <position position="36"/>
    </location>
    <ligand>
        <name>substrate</name>
    </ligand>
</feature>
<feature type="binding site" evidence="1">
    <location>
        <begin position="59"/>
        <end position="62"/>
    </location>
    <ligand>
        <name>substrate</name>
    </ligand>
</feature>
<feature type="binding site" evidence="1">
    <location>
        <position position="114"/>
    </location>
    <ligand>
        <name>substrate</name>
    </ligand>
</feature>
<feature type="binding site" evidence="1">
    <location>
        <position position="147"/>
    </location>
    <ligand>
        <name>substrate</name>
    </ligand>
</feature>
<feature type="binding site" evidence="1">
    <location>
        <position position="198"/>
    </location>
    <ligand>
        <name>ATP</name>
        <dbReference type="ChEBI" id="CHEBI:30616"/>
    </ligand>
</feature>
<feature type="binding site" evidence="1">
    <location>
        <position position="320"/>
    </location>
    <ligand>
        <name>ATP</name>
        <dbReference type="ChEBI" id="CHEBI:30616"/>
    </ligand>
</feature>
<feature type="binding site" evidence="1">
    <location>
        <begin position="346"/>
        <end position="349"/>
    </location>
    <ligand>
        <name>ATP</name>
        <dbReference type="ChEBI" id="CHEBI:30616"/>
    </ligand>
</feature>
<feature type="sequence conflict" description="In Ref. 1." evidence="2" ref="1">
    <original>A</original>
    <variation>AADAEAVVKDIA</variation>
    <location>
        <position position="281"/>
    </location>
</feature>
<dbReference type="EC" id="2.7.2.3"/>
<dbReference type="EMBL" id="AE002098">
    <property type="protein sequence ID" value="AAF40489.1"/>
    <property type="status" value="ALT_SEQ"/>
    <property type="molecule type" value="Genomic_DNA"/>
</dbReference>
<dbReference type="PIR" id="H81247">
    <property type="entry name" value="H81247"/>
</dbReference>
<dbReference type="RefSeq" id="NP_273076.1">
    <property type="nucleotide sequence ID" value="NC_003112.2"/>
</dbReference>
<dbReference type="SMR" id="Q9K1R0"/>
<dbReference type="FunCoup" id="Q9K1R0">
    <property type="interactions" value="465"/>
</dbReference>
<dbReference type="STRING" id="122586.NMB0010"/>
<dbReference type="PaxDb" id="122586-NMB0010"/>
<dbReference type="KEGG" id="nme:NMB0010"/>
<dbReference type="PATRIC" id="fig|122586.8.peg.11"/>
<dbReference type="HOGENOM" id="CLU_025427_0_2_4"/>
<dbReference type="InParanoid" id="Q9K1R0"/>
<dbReference type="OrthoDB" id="9808460at2"/>
<dbReference type="UniPathway" id="UPA00109">
    <property type="reaction ID" value="UER00185"/>
</dbReference>
<dbReference type="Proteomes" id="UP000000425">
    <property type="component" value="Chromosome"/>
</dbReference>
<dbReference type="GO" id="GO:0005829">
    <property type="term" value="C:cytosol"/>
    <property type="evidence" value="ECO:0000318"/>
    <property type="project" value="GO_Central"/>
</dbReference>
<dbReference type="GO" id="GO:0043531">
    <property type="term" value="F:ADP binding"/>
    <property type="evidence" value="ECO:0000318"/>
    <property type="project" value="GO_Central"/>
</dbReference>
<dbReference type="GO" id="GO:0005524">
    <property type="term" value="F:ATP binding"/>
    <property type="evidence" value="ECO:0000318"/>
    <property type="project" value="GO_Central"/>
</dbReference>
<dbReference type="GO" id="GO:0004618">
    <property type="term" value="F:phosphoglycerate kinase activity"/>
    <property type="evidence" value="ECO:0000318"/>
    <property type="project" value="GO_Central"/>
</dbReference>
<dbReference type="GO" id="GO:0006094">
    <property type="term" value="P:gluconeogenesis"/>
    <property type="evidence" value="ECO:0000318"/>
    <property type="project" value="GO_Central"/>
</dbReference>
<dbReference type="GO" id="GO:0006096">
    <property type="term" value="P:glycolytic process"/>
    <property type="evidence" value="ECO:0000318"/>
    <property type="project" value="GO_Central"/>
</dbReference>
<dbReference type="FunFam" id="3.40.50.1260:FF:000001">
    <property type="entry name" value="Phosphoglycerate kinase"/>
    <property type="match status" value="1"/>
</dbReference>
<dbReference type="FunFam" id="3.40.50.1260:FF:000002">
    <property type="entry name" value="Phosphoglycerate kinase"/>
    <property type="match status" value="1"/>
</dbReference>
<dbReference type="Gene3D" id="3.40.50.1260">
    <property type="entry name" value="Phosphoglycerate kinase, N-terminal domain"/>
    <property type="match status" value="2"/>
</dbReference>
<dbReference type="HAMAP" id="MF_00145">
    <property type="entry name" value="Phosphoglyc_kinase"/>
    <property type="match status" value="1"/>
</dbReference>
<dbReference type="InterPro" id="IPR001576">
    <property type="entry name" value="Phosphoglycerate_kinase"/>
</dbReference>
<dbReference type="InterPro" id="IPR015911">
    <property type="entry name" value="Phosphoglycerate_kinase_CS"/>
</dbReference>
<dbReference type="InterPro" id="IPR015824">
    <property type="entry name" value="Phosphoglycerate_kinase_N"/>
</dbReference>
<dbReference type="InterPro" id="IPR036043">
    <property type="entry name" value="Phosphoglycerate_kinase_sf"/>
</dbReference>
<dbReference type="PANTHER" id="PTHR11406">
    <property type="entry name" value="PHOSPHOGLYCERATE KINASE"/>
    <property type="match status" value="1"/>
</dbReference>
<dbReference type="PANTHER" id="PTHR11406:SF23">
    <property type="entry name" value="PHOSPHOGLYCERATE KINASE 1, CHLOROPLASTIC-RELATED"/>
    <property type="match status" value="1"/>
</dbReference>
<dbReference type="Pfam" id="PF00162">
    <property type="entry name" value="PGK"/>
    <property type="match status" value="1"/>
</dbReference>
<dbReference type="PIRSF" id="PIRSF000724">
    <property type="entry name" value="Pgk"/>
    <property type="match status" value="1"/>
</dbReference>
<dbReference type="PRINTS" id="PR00477">
    <property type="entry name" value="PHGLYCKINASE"/>
</dbReference>
<dbReference type="SUPFAM" id="SSF53748">
    <property type="entry name" value="Phosphoglycerate kinase"/>
    <property type="match status" value="1"/>
</dbReference>
<dbReference type="PROSITE" id="PS00111">
    <property type="entry name" value="PGLYCERATE_KINASE"/>
    <property type="match status" value="1"/>
</dbReference>
<proteinExistence type="inferred from homology"/>
<protein>
    <recommendedName>
        <fullName>Phosphoglycerate kinase</fullName>
        <ecNumber>2.7.2.3</ecNumber>
    </recommendedName>
</protein>
<accession>Q9K1R0</accession>